<accession>P68046</accession>
<accession>P10779</accession>
<sequence>VHLTADEKAAVTALWGKVNVDEVGGEALGRLLVVYPWTQRFFDSFGDLSSPDAVMGNPKVKAHGKKVLNSFSDGLKNLDNLKGTFAKLSELHCDKLHVDPENFKLLGNVLVCVLAHHFGKEFTPQVQAAYQKVVAGVANALAHKYH</sequence>
<gene>
    <name type="primary">HBB</name>
</gene>
<reference key="1">
    <citation type="journal article" date="1989" name="Biol. Chem. Hoppe-Seyler">
        <title>Carnivora: the primary structure of the Pacific Walrus (Odobenus rosmarus divergens, Pinnipedia) hemoglobin.</title>
        <authorList>
            <person name="Lin H.-X."/>
            <person name="Kleinschmidt T."/>
            <person name="Johnson M.L."/>
            <person name="Braunitzer G."/>
        </authorList>
    </citation>
    <scope>PROTEIN SEQUENCE</scope>
</reference>
<protein>
    <recommendedName>
        <fullName>Hemoglobin subunit beta</fullName>
    </recommendedName>
    <alternativeName>
        <fullName>Beta-globin</fullName>
    </alternativeName>
    <alternativeName>
        <fullName>Hemoglobin beta chain</fullName>
    </alternativeName>
</protein>
<organism>
    <name type="scientific">Odobenus rosmarus divergens</name>
    <name type="common">Pacific walrus</name>
    <dbReference type="NCBI Taxonomy" id="9708"/>
    <lineage>
        <taxon>Eukaryota</taxon>
        <taxon>Metazoa</taxon>
        <taxon>Chordata</taxon>
        <taxon>Craniata</taxon>
        <taxon>Vertebrata</taxon>
        <taxon>Euteleostomi</taxon>
        <taxon>Mammalia</taxon>
        <taxon>Eutheria</taxon>
        <taxon>Laurasiatheria</taxon>
        <taxon>Carnivora</taxon>
        <taxon>Caniformia</taxon>
        <taxon>Pinnipedia</taxon>
        <taxon>Odobenidae</taxon>
        <taxon>Odobenus</taxon>
    </lineage>
</organism>
<keyword id="KW-0007">Acetylation</keyword>
<keyword id="KW-0903">Direct protein sequencing</keyword>
<keyword id="KW-0349">Heme</keyword>
<keyword id="KW-0408">Iron</keyword>
<keyword id="KW-0479">Metal-binding</keyword>
<keyword id="KW-0561">Oxygen transport</keyword>
<keyword id="KW-0597">Phosphoprotein</keyword>
<keyword id="KW-1185">Reference proteome</keyword>
<keyword id="KW-0702">S-nitrosylation</keyword>
<keyword id="KW-0813">Transport</keyword>
<feature type="chain" id="PRO_0000053038" description="Hemoglobin subunit beta">
    <location>
        <begin position="1"/>
        <end position="146"/>
    </location>
</feature>
<feature type="domain" description="Globin" evidence="3">
    <location>
        <begin position="2"/>
        <end position="146"/>
    </location>
</feature>
<feature type="binding site" description="distal binding residue">
    <location>
        <position position="63"/>
    </location>
    <ligand>
        <name>heme b</name>
        <dbReference type="ChEBI" id="CHEBI:60344"/>
    </ligand>
    <ligandPart>
        <name>Fe</name>
        <dbReference type="ChEBI" id="CHEBI:18248"/>
    </ligandPart>
</feature>
<feature type="binding site" description="proximal binding residue">
    <location>
        <position position="92"/>
    </location>
    <ligand>
        <name>heme b</name>
        <dbReference type="ChEBI" id="CHEBI:60344"/>
    </ligand>
    <ligandPart>
        <name>Fe</name>
        <dbReference type="ChEBI" id="CHEBI:18248"/>
    </ligandPart>
</feature>
<feature type="modified residue" description="N-acetylvaline" evidence="1">
    <location>
        <position position="1"/>
    </location>
</feature>
<feature type="modified residue" description="Phosphothreonine" evidence="2">
    <location>
        <position position="12"/>
    </location>
</feature>
<feature type="modified residue" description="Phosphoserine" evidence="2">
    <location>
        <position position="44"/>
    </location>
</feature>
<feature type="modified residue" description="N6-acetyllysine" evidence="2">
    <location>
        <position position="59"/>
    </location>
</feature>
<feature type="modified residue" description="N6-acetyllysine" evidence="2">
    <location>
        <position position="82"/>
    </location>
</feature>
<feature type="modified residue" description="S-nitrosocysteine" evidence="2">
    <location>
        <position position="93"/>
    </location>
</feature>
<feature type="modified residue" description="N6-acetyllysine" evidence="2">
    <location>
        <position position="144"/>
    </location>
</feature>
<dbReference type="PIR" id="S02820">
    <property type="entry name" value="HBUW"/>
</dbReference>
<dbReference type="SMR" id="P68046"/>
<dbReference type="STRING" id="9708.P68046"/>
<dbReference type="InParanoid" id="P68046"/>
<dbReference type="Proteomes" id="UP000245340">
    <property type="component" value="Unplaced"/>
</dbReference>
<dbReference type="GO" id="GO:0072562">
    <property type="term" value="C:blood microparticle"/>
    <property type="evidence" value="ECO:0007669"/>
    <property type="project" value="TreeGrafter"/>
</dbReference>
<dbReference type="GO" id="GO:0031838">
    <property type="term" value="C:haptoglobin-hemoglobin complex"/>
    <property type="evidence" value="ECO:0007669"/>
    <property type="project" value="TreeGrafter"/>
</dbReference>
<dbReference type="GO" id="GO:0005833">
    <property type="term" value="C:hemoglobin complex"/>
    <property type="evidence" value="ECO:0007669"/>
    <property type="project" value="InterPro"/>
</dbReference>
<dbReference type="GO" id="GO:0031720">
    <property type="term" value="F:haptoglobin binding"/>
    <property type="evidence" value="ECO:0007669"/>
    <property type="project" value="TreeGrafter"/>
</dbReference>
<dbReference type="GO" id="GO:0020037">
    <property type="term" value="F:heme binding"/>
    <property type="evidence" value="ECO:0007669"/>
    <property type="project" value="InterPro"/>
</dbReference>
<dbReference type="GO" id="GO:0031721">
    <property type="term" value="F:hemoglobin alpha binding"/>
    <property type="evidence" value="ECO:0007669"/>
    <property type="project" value="TreeGrafter"/>
</dbReference>
<dbReference type="GO" id="GO:0046872">
    <property type="term" value="F:metal ion binding"/>
    <property type="evidence" value="ECO:0007669"/>
    <property type="project" value="UniProtKB-KW"/>
</dbReference>
<dbReference type="GO" id="GO:0043177">
    <property type="term" value="F:organic acid binding"/>
    <property type="evidence" value="ECO:0007669"/>
    <property type="project" value="TreeGrafter"/>
</dbReference>
<dbReference type="GO" id="GO:0019825">
    <property type="term" value="F:oxygen binding"/>
    <property type="evidence" value="ECO:0007669"/>
    <property type="project" value="InterPro"/>
</dbReference>
<dbReference type="GO" id="GO:0005344">
    <property type="term" value="F:oxygen carrier activity"/>
    <property type="evidence" value="ECO:0007669"/>
    <property type="project" value="UniProtKB-KW"/>
</dbReference>
<dbReference type="GO" id="GO:0004601">
    <property type="term" value="F:peroxidase activity"/>
    <property type="evidence" value="ECO:0007669"/>
    <property type="project" value="TreeGrafter"/>
</dbReference>
<dbReference type="GO" id="GO:0042744">
    <property type="term" value="P:hydrogen peroxide catabolic process"/>
    <property type="evidence" value="ECO:0007669"/>
    <property type="project" value="TreeGrafter"/>
</dbReference>
<dbReference type="CDD" id="cd08925">
    <property type="entry name" value="Hb-beta-like"/>
    <property type="match status" value="1"/>
</dbReference>
<dbReference type="FunFam" id="1.10.490.10:FF:000001">
    <property type="entry name" value="Hemoglobin subunit beta"/>
    <property type="match status" value="1"/>
</dbReference>
<dbReference type="Gene3D" id="1.10.490.10">
    <property type="entry name" value="Globins"/>
    <property type="match status" value="1"/>
</dbReference>
<dbReference type="InterPro" id="IPR000971">
    <property type="entry name" value="Globin"/>
</dbReference>
<dbReference type="InterPro" id="IPR009050">
    <property type="entry name" value="Globin-like_sf"/>
</dbReference>
<dbReference type="InterPro" id="IPR012292">
    <property type="entry name" value="Globin/Proto"/>
</dbReference>
<dbReference type="InterPro" id="IPR002337">
    <property type="entry name" value="Hemoglobin_b"/>
</dbReference>
<dbReference type="InterPro" id="IPR050056">
    <property type="entry name" value="Hemoglobin_oxygen_transport"/>
</dbReference>
<dbReference type="PANTHER" id="PTHR11442">
    <property type="entry name" value="HEMOGLOBIN FAMILY MEMBER"/>
    <property type="match status" value="1"/>
</dbReference>
<dbReference type="PANTHER" id="PTHR11442:SF42">
    <property type="entry name" value="HEMOGLOBIN SUBUNIT BETA"/>
    <property type="match status" value="1"/>
</dbReference>
<dbReference type="Pfam" id="PF00042">
    <property type="entry name" value="Globin"/>
    <property type="match status" value="1"/>
</dbReference>
<dbReference type="PRINTS" id="PR00814">
    <property type="entry name" value="BETAHAEM"/>
</dbReference>
<dbReference type="SUPFAM" id="SSF46458">
    <property type="entry name" value="Globin-like"/>
    <property type="match status" value="1"/>
</dbReference>
<dbReference type="PROSITE" id="PS01033">
    <property type="entry name" value="GLOBIN"/>
    <property type="match status" value="1"/>
</dbReference>
<name>HBB_ODORO</name>
<evidence type="ECO:0000250" key="1">
    <source>
        <dbReference type="UniProtKB" id="P02086"/>
    </source>
</evidence>
<evidence type="ECO:0000250" key="2">
    <source>
        <dbReference type="UniProtKB" id="P68871"/>
    </source>
</evidence>
<evidence type="ECO:0000255" key="3">
    <source>
        <dbReference type="PROSITE-ProRule" id="PRU00238"/>
    </source>
</evidence>
<proteinExistence type="evidence at protein level"/>
<comment type="function">
    <text>Involved in oxygen transport from the lung to the various peripheral tissues.</text>
</comment>
<comment type="subunit">
    <text>Heterotetramer of two alpha chains and two beta chains.</text>
</comment>
<comment type="tissue specificity">
    <text>Red blood cells.</text>
</comment>
<comment type="similarity">
    <text evidence="3">Belongs to the globin family.</text>
</comment>